<evidence type="ECO:0000250" key="1"/>
<evidence type="ECO:0000255" key="2"/>
<evidence type="ECO:0000305" key="3"/>
<keyword id="KW-0106">Calcium</keyword>
<keyword id="KW-0963">Cytoplasm</keyword>
<keyword id="KW-0378">Hydrolase</keyword>
<keyword id="KW-0479">Metal-binding</keyword>
<name>DRP35_STAAR</name>
<organism>
    <name type="scientific">Staphylococcus aureus (strain MRSA252)</name>
    <dbReference type="NCBI Taxonomy" id="282458"/>
    <lineage>
        <taxon>Bacteria</taxon>
        <taxon>Bacillati</taxon>
        <taxon>Bacillota</taxon>
        <taxon>Bacilli</taxon>
        <taxon>Bacillales</taxon>
        <taxon>Staphylococcaceae</taxon>
        <taxon>Staphylococcus</taxon>
    </lineage>
</organism>
<protein>
    <recommendedName>
        <fullName>Lactonase drp35</fullName>
        <ecNumber>3.1.1.-</ecNumber>
    </recommendedName>
</protein>
<sequence length="324" mass="36112">MMSQQDLPTLFYSGKSNSAVPIISESELQTITAEPWLEISKKGLQLEGLNFDRQGQLFLLDVFEGNIFKVNPETKEIKRPFVSHKANPAAIKIHKDGRLFICYLGDFKSTGGIFAATENGDNIQDIIEDLSTEYCIDDMVFDSKGGFYFTDFRGYSTNPLGGVYYVTPDFKTVTPIIQNISVANGIALSTDEKVLWVTETTANRLHRIALEDDGVTIQPFGATIPYYFTGHEGPDSCCIDSDDNLYVAMYGQGRVLVFNKRGYPIGQILIPSRDEGHMLRSTHPQFIPGTNQLIICSNDIEMDGGSMLYTVNGFAKGHKSYQFQ</sequence>
<accession>Q6GDB6</accession>
<proteinExistence type="inferred from homology"/>
<dbReference type="EC" id="3.1.1.-"/>
<dbReference type="EMBL" id="BX571856">
    <property type="protein sequence ID" value="CAG41745.1"/>
    <property type="molecule type" value="Genomic_DNA"/>
</dbReference>
<dbReference type="SMR" id="Q6GDB6"/>
<dbReference type="KEGG" id="sar:SAR2770"/>
<dbReference type="HOGENOM" id="CLU_036110_2_0_9"/>
<dbReference type="Proteomes" id="UP000000596">
    <property type="component" value="Chromosome"/>
</dbReference>
<dbReference type="GO" id="GO:0005737">
    <property type="term" value="C:cytoplasm"/>
    <property type="evidence" value="ECO:0007669"/>
    <property type="project" value="UniProtKB-SubCell"/>
</dbReference>
<dbReference type="GO" id="GO:0016787">
    <property type="term" value="F:hydrolase activity"/>
    <property type="evidence" value="ECO:0007669"/>
    <property type="project" value="UniProtKB-KW"/>
</dbReference>
<dbReference type="GO" id="GO:0046872">
    <property type="term" value="F:metal ion binding"/>
    <property type="evidence" value="ECO:0007669"/>
    <property type="project" value="UniProtKB-KW"/>
</dbReference>
<dbReference type="Gene3D" id="2.120.10.30">
    <property type="entry name" value="TolB, C-terminal domain"/>
    <property type="match status" value="1"/>
</dbReference>
<dbReference type="InterPro" id="IPR011042">
    <property type="entry name" value="6-blade_b-propeller_TolB-like"/>
</dbReference>
<dbReference type="InterPro" id="IPR013658">
    <property type="entry name" value="SGL"/>
</dbReference>
<dbReference type="InterPro" id="IPR051262">
    <property type="entry name" value="SMP-30/CGR1_Lactonase"/>
</dbReference>
<dbReference type="PANTHER" id="PTHR47572:SF4">
    <property type="entry name" value="LACTONASE DRP35"/>
    <property type="match status" value="1"/>
</dbReference>
<dbReference type="PANTHER" id="PTHR47572">
    <property type="entry name" value="LIPOPROTEIN-RELATED"/>
    <property type="match status" value="1"/>
</dbReference>
<dbReference type="Pfam" id="PF08450">
    <property type="entry name" value="SGL"/>
    <property type="match status" value="1"/>
</dbReference>
<dbReference type="SUPFAM" id="SSF63829">
    <property type="entry name" value="Calcium-dependent phosphotriesterase"/>
    <property type="match status" value="1"/>
</dbReference>
<gene>
    <name type="primary">drp35</name>
    <name type="ordered locus">SAR2770</name>
</gene>
<reference key="1">
    <citation type="journal article" date="2004" name="Proc. Natl. Acad. Sci. U.S.A.">
        <title>Complete genomes of two clinical Staphylococcus aureus strains: evidence for the rapid evolution of virulence and drug resistance.</title>
        <authorList>
            <person name="Holden M.T.G."/>
            <person name="Feil E.J."/>
            <person name="Lindsay J.A."/>
            <person name="Peacock S.J."/>
            <person name="Day N.P.J."/>
            <person name="Enright M.C."/>
            <person name="Foster T.J."/>
            <person name="Moore C.E."/>
            <person name="Hurst L."/>
            <person name="Atkin R."/>
            <person name="Barron A."/>
            <person name="Bason N."/>
            <person name="Bentley S.D."/>
            <person name="Chillingworth C."/>
            <person name="Chillingworth T."/>
            <person name="Churcher C."/>
            <person name="Clark L."/>
            <person name="Corton C."/>
            <person name="Cronin A."/>
            <person name="Doggett J."/>
            <person name="Dowd L."/>
            <person name="Feltwell T."/>
            <person name="Hance Z."/>
            <person name="Harris B."/>
            <person name="Hauser H."/>
            <person name="Holroyd S."/>
            <person name="Jagels K."/>
            <person name="James K.D."/>
            <person name="Lennard N."/>
            <person name="Line A."/>
            <person name="Mayes R."/>
            <person name="Moule S."/>
            <person name="Mungall K."/>
            <person name="Ormond D."/>
            <person name="Quail M.A."/>
            <person name="Rabbinowitsch E."/>
            <person name="Rutherford K.M."/>
            <person name="Sanders M."/>
            <person name="Sharp S."/>
            <person name="Simmonds M."/>
            <person name="Stevens K."/>
            <person name="Whitehead S."/>
            <person name="Barrell B.G."/>
            <person name="Spratt B.G."/>
            <person name="Parkhill J."/>
        </authorList>
    </citation>
    <scope>NUCLEOTIDE SEQUENCE [LARGE SCALE GENOMIC DNA]</scope>
    <source>
        <strain>MRSA252</strain>
    </source>
</reference>
<comment type="function">
    <text evidence="1">Exhibits lactonase activity. Acts in cells with perturbed membrane integrity and is possibly related to the membrane homeostasis (By similarity).</text>
</comment>
<comment type="cofactor">
    <cofactor evidence="1">
        <name>Ca(2+)</name>
        <dbReference type="ChEBI" id="CHEBI:29108"/>
    </cofactor>
    <text evidence="1">Binds 2 Ca(2+) ions per subunit.</text>
</comment>
<comment type="subcellular location">
    <subcellularLocation>
        <location evidence="1">Cytoplasm</location>
    </subcellularLocation>
</comment>
<comment type="similarity">
    <text evidence="3">Belongs to the SMP-30/CGR1 family.</text>
</comment>
<feature type="chain" id="PRO_0000259747" description="Lactonase drp35">
    <location>
        <begin position="1"/>
        <end position="324"/>
    </location>
</feature>
<feature type="active site" description="Proton donor" evidence="2">
    <location>
        <position position="235"/>
    </location>
</feature>
<feature type="binding site" evidence="1">
    <location>
        <position position="47"/>
    </location>
    <ligand>
        <name>Ca(2+)</name>
        <dbReference type="ChEBI" id="CHEBI:29108"/>
        <label>1</label>
        <note>catalytic</note>
    </ligand>
</feature>
<feature type="binding site" evidence="1">
    <location>
        <position position="109"/>
    </location>
    <ligand>
        <name>Ca(2+)</name>
        <dbReference type="ChEBI" id="CHEBI:29108"/>
        <label>2</label>
    </ligand>
</feature>
<feature type="binding site" evidence="1">
    <location>
        <position position="111"/>
    </location>
    <ligand>
        <name>Ca(2+)</name>
        <dbReference type="ChEBI" id="CHEBI:29108"/>
        <label>2</label>
    </ligand>
</feature>
<feature type="binding site" evidence="1">
    <location>
        <position position="129"/>
    </location>
    <ligand>
        <name>Ca(2+)</name>
        <dbReference type="ChEBI" id="CHEBI:29108"/>
        <label>2</label>
    </ligand>
</feature>
<feature type="binding site" evidence="1">
    <location>
        <position position="132"/>
    </location>
    <ligand>
        <name>Ca(2+)</name>
        <dbReference type="ChEBI" id="CHEBI:29108"/>
        <label>2</label>
    </ligand>
</feature>
<feature type="binding site" evidence="1">
    <location>
        <position position="134"/>
    </location>
    <ligand>
        <name>Ca(2+)</name>
        <dbReference type="ChEBI" id="CHEBI:29108"/>
        <label>2</label>
    </ligand>
</feature>
<feature type="binding site" evidence="1">
    <location>
        <position position="137"/>
    </location>
    <ligand>
        <name>Ca(2+)</name>
        <dbReference type="ChEBI" id="CHEBI:29108"/>
        <label>1</label>
        <note>catalytic</note>
    </ligand>
</feature>
<feature type="binding site" evidence="1">
    <location>
        <position position="184"/>
    </location>
    <ligand>
        <name>Ca(2+)</name>
        <dbReference type="ChEBI" id="CHEBI:29108"/>
        <label>1</label>
        <note>catalytic</note>
    </ligand>
</feature>
<feature type="binding site" evidence="1">
    <location>
        <position position="235"/>
    </location>
    <ligand>
        <name>Ca(2+)</name>
        <dbReference type="ChEBI" id="CHEBI:29108"/>
        <label>1</label>
        <note>catalytic</note>
    </ligand>
</feature>
<feature type="binding site" evidence="1">
    <location>
        <position position="236"/>
    </location>
    <ligand>
        <name>Ca(2+)</name>
        <dbReference type="ChEBI" id="CHEBI:29108"/>
        <label>1</label>
        <note>catalytic</note>
    </ligand>
</feature>